<gene>
    <name type="ordered locus">At5g52780</name>
    <name type="ORF">F6N7.27</name>
</gene>
<proteinExistence type="evidence at transcript level"/>
<dbReference type="EMBL" id="AB025606">
    <property type="protein sequence ID" value="BAA98096.1"/>
    <property type="molecule type" value="Genomic_DNA"/>
</dbReference>
<dbReference type="EMBL" id="CP002688">
    <property type="protein sequence ID" value="AED96259.1"/>
    <property type="molecule type" value="Genomic_DNA"/>
</dbReference>
<dbReference type="EMBL" id="BT025520">
    <property type="protein sequence ID" value="ABF58938.1"/>
    <property type="molecule type" value="mRNA"/>
</dbReference>
<dbReference type="EMBL" id="AY086617">
    <property type="protein sequence ID" value="AAM63676.1"/>
    <property type="molecule type" value="mRNA"/>
</dbReference>
<dbReference type="EMBL" id="AK228908">
    <property type="protein sequence ID" value="BAF00797.1"/>
    <property type="molecule type" value="mRNA"/>
</dbReference>
<dbReference type="RefSeq" id="NP_200090.1">
    <property type="nucleotide sequence ID" value="NM_124656.3"/>
</dbReference>
<dbReference type="FunCoup" id="Q9LTD9">
    <property type="interactions" value="625"/>
</dbReference>
<dbReference type="STRING" id="3702.Q9LTD9"/>
<dbReference type="PaxDb" id="3702-AT5G52780.1"/>
<dbReference type="ProteomicsDB" id="243158"/>
<dbReference type="EnsemblPlants" id="AT5G52780.1">
    <property type="protein sequence ID" value="AT5G52780.1"/>
    <property type="gene ID" value="AT5G52780"/>
</dbReference>
<dbReference type="GeneID" id="835355"/>
<dbReference type="Gramene" id="AT5G52780.1">
    <property type="protein sequence ID" value="AT5G52780.1"/>
    <property type="gene ID" value="AT5G52780"/>
</dbReference>
<dbReference type="KEGG" id="ath:AT5G52780"/>
<dbReference type="Araport" id="AT5G52780"/>
<dbReference type="TAIR" id="AT5G52780">
    <property type="gene designation" value="PAM68L"/>
</dbReference>
<dbReference type="eggNOG" id="ENOG502S1GI">
    <property type="taxonomic scope" value="Eukaryota"/>
</dbReference>
<dbReference type="HOGENOM" id="CLU_129567_0_0_1"/>
<dbReference type="InParanoid" id="Q9LTD9"/>
<dbReference type="OMA" id="GIFSTSW"/>
<dbReference type="OrthoDB" id="678088at2759"/>
<dbReference type="PhylomeDB" id="Q9LTD9"/>
<dbReference type="PRO" id="PR:Q9LTD9"/>
<dbReference type="Proteomes" id="UP000006548">
    <property type="component" value="Chromosome 5"/>
</dbReference>
<dbReference type="ExpressionAtlas" id="Q9LTD9">
    <property type="expression patterns" value="baseline and differential"/>
</dbReference>
<dbReference type="GO" id="GO:0009507">
    <property type="term" value="C:chloroplast"/>
    <property type="evidence" value="ECO:0007005"/>
    <property type="project" value="TAIR"/>
</dbReference>
<dbReference type="GO" id="GO:0009535">
    <property type="term" value="C:chloroplast thylakoid membrane"/>
    <property type="evidence" value="ECO:0007005"/>
    <property type="project" value="TAIR"/>
</dbReference>
<dbReference type="GO" id="GO:0010258">
    <property type="term" value="P:NADH dehydrogenase complex (plastoquinone) assembly"/>
    <property type="evidence" value="ECO:0000315"/>
    <property type="project" value="TAIR"/>
</dbReference>
<dbReference type="InterPro" id="IPR021855">
    <property type="entry name" value="PAM68-like"/>
</dbReference>
<dbReference type="PANTHER" id="PTHR34575:SF6">
    <property type="entry name" value="EXPRESSED PROTEIN"/>
    <property type="match status" value="1"/>
</dbReference>
<dbReference type="PANTHER" id="PTHR34575">
    <property type="entry name" value="PROTEIN PAM68, CHLOROPLASTIC"/>
    <property type="match status" value="1"/>
</dbReference>
<dbReference type="Pfam" id="PF11947">
    <property type="entry name" value="DUF3464"/>
    <property type="match status" value="1"/>
</dbReference>
<accession>Q9LTD9</accession>
<organism>
    <name type="scientific">Arabidopsis thaliana</name>
    <name type="common">Mouse-ear cress</name>
    <dbReference type="NCBI Taxonomy" id="3702"/>
    <lineage>
        <taxon>Eukaryota</taxon>
        <taxon>Viridiplantae</taxon>
        <taxon>Streptophyta</taxon>
        <taxon>Embryophyta</taxon>
        <taxon>Tracheophyta</taxon>
        <taxon>Spermatophyta</taxon>
        <taxon>Magnoliopsida</taxon>
        <taxon>eudicotyledons</taxon>
        <taxon>Gunneridae</taxon>
        <taxon>Pentapetalae</taxon>
        <taxon>rosids</taxon>
        <taxon>malvids</taxon>
        <taxon>Brassicales</taxon>
        <taxon>Brassicaceae</taxon>
        <taxon>Camelineae</taxon>
        <taxon>Arabidopsis</taxon>
    </lineage>
</organism>
<evidence type="ECO:0000255" key="1"/>
<evidence type="ECO:0000256" key="2">
    <source>
        <dbReference type="SAM" id="MobiDB-lite"/>
    </source>
</evidence>
<evidence type="ECO:0000269" key="3">
    <source>
    </source>
</evidence>
<evidence type="ECO:0000305" key="4"/>
<keyword id="KW-0472">Membrane</keyword>
<keyword id="KW-1185">Reference proteome</keyword>
<keyword id="KW-0812">Transmembrane</keyword>
<keyword id="KW-1133">Transmembrane helix</keyword>
<reference key="1">
    <citation type="submission" date="1999-04" db="EMBL/GenBank/DDBJ databases">
        <title>Structural analysis of Arabidopsis thaliana chromosome 5. XI.</title>
        <authorList>
            <person name="Kaneko T."/>
            <person name="Katoh T."/>
            <person name="Asamizu E."/>
            <person name="Sato S."/>
            <person name="Nakamura Y."/>
            <person name="Kotani H."/>
            <person name="Tabata S."/>
        </authorList>
    </citation>
    <scope>NUCLEOTIDE SEQUENCE [LARGE SCALE GENOMIC DNA]</scope>
    <source>
        <strain>cv. Columbia</strain>
    </source>
</reference>
<reference key="2">
    <citation type="journal article" date="2017" name="Plant J.">
        <title>Araport11: a complete reannotation of the Arabidopsis thaliana reference genome.</title>
        <authorList>
            <person name="Cheng C.Y."/>
            <person name="Krishnakumar V."/>
            <person name="Chan A.P."/>
            <person name="Thibaud-Nissen F."/>
            <person name="Schobel S."/>
            <person name="Town C.D."/>
        </authorList>
    </citation>
    <scope>GENOME REANNOTATION</scope>
    <source>
        <strain>cv. Columbia</strain>
    </source>
</reference>
<reference key="3">
    <citation type="submission" date="2006-05" db="EMBL/GenBank/DDBJ databases">
        <title>Arabidopsis ORF clones.</title>
        <authorList>
            <person name="Kim C.J."/>
            <person name="Chen H."/>
            <person name="Quinitio C."/>
            <person name="Shinn P."/>
            <person name="Ecker J.R."/>
        </authorList>
    </citation>
    <scope>NUCLEOTIDE SEQUENCE [MRNA]</scope>
    <source>
        <strain>cv. Columbia</strain>
    </source>
</reference>
<reference key="4">
    <citation type="submission" date="2006-07" db="EMBL/GenBank/DDBJ databases">
        <title>Large-scale analysis of RIKEN Arabidopsis full-length (RAFL) cDNAs.</title>
        <authorList>
            <person name="Totoki Y."/>
            <person name="Seki M."/>
            <person name="Ishida J."/>
            <person name="Nakajima M."/>
            <person name="Enju A."/>
            <person name="Kamiya A."/>
            <person name="Narusaka M."/>
            <person name="Shin-i T."/>
            <person name="Nakagawa M."/>
            <person name="Sakamoto N."/>
            <person name="Oishi K."/>
            <person name="Kohara Y."/>
            <person name="Kobayashi M."/>
            <person name="Toyoda A."/>
            <person name="Sakaki Y."/>
            <person name="Sakurai T."/>
            <person name="Iida K."/>
            <person name="Akiyama K."/>
            <person name="Satou M."/>
            <person name="Toyoda T."/>
            <person name="Konagaya A."/>
            <person name="Carninci P."/>
            <person name="Kawai J."/>
            <person name="Hayashizaki Y."/>
            <person name="Shinozaki K."/>
        </authorList>
    </citation>
    <scope>NUCLEOTIDE SEQUENCE [LARGE SCALE MRNA]</scope>
    <source>
        <strain>cv. Columbia</strain>
    </source>
</reference>
<reference key="5">
    <citation type="submission" date="2002-03" db="EMBL/GenBank/DDBJ databases">
        <title>Full-length cDNA from Arabidopsis thaliana.</title>
        <authorList>
            <person name="Brover V.V."/>
            <person name="Troukhan M.E."/>
            <person name="Alexandrov N.A."/>
            <person name="Lu Y.-P."/>
            <person name="Flavell R.B."/>
            <person name="Feldmann K.A."/>
        </authorList>
    </citation>
    <scope>NUCLEOTIDE SEQUENCE [LARGE SCALE MRNA]</scope>
</reference>
<reference key="6">
    <citation type="journal article" date="2010" name="Plant Cell">
        <title>The Arabidopsis thylakoid protein PAM68 is required for efficient D1 biogenesis and photosystem II assembly.</title>
        <authorList>
            <person name="Armbruster U."/>
            <person name="Zuhlke J."/>
            <person name="Rengstl B."/>
            <person name="Kreller R."/>
            <person name="Makarenko E."/>
            <person name="Ruhle T."/>
            <person name="Schunemann D."/>
            <person name="Jahns P."/>
            <person name="Weisshaar B."/>
            <person name="Nickelsen J."/>
            <person name="Leister D."/>
        </authorList>
    </citation>
    <scope>DISRUPTION PHENOTYPE</scope>
</reference>
<name>Y5278_ARATH</name>
<feature type="chain" id="PRO_0000403965" description="Uncharacterized protein PAM68-like">
    <location>
        <begin position="1"/>
        <end position="168"/>
    </location>
</feature>
<feature type="transmembrane region" description="Helical" evidence="1">
    <location>
        <begin position="84"/>
        <end position="104"/>
    </location>
</feature>
<feature type="transmembrane region" description="Helical" evidence="1">
    <location>
        <begin position="113"/>
        <end position="133"/>
    </location>
</feature>
<feature type="region of interest" description="Disordered" evidence="2">
    <location>
        <begin position="18"/>
        <end position="73"/>
    </location>
</feature>
<feature type="compositionally biased region" description="Basic and acidic residues" evidence="2">
    <location>
        <begin position="55"/>
        <end position="64"/>
    </location>
</feature>
<sequence>MRALLCSHRLLPLSSLSRTTVKTKSHNPKTLYPNNKPRWESKLHAGPKGFQSSRTSEKPGRPDPDPEDDPPIPQEVFERMMGRIVVSVGTPLGLGVAILKVLEVLKDRNVWDVPLWVPYLTTLVTFGSSALGIAYGSLSTNLDPAKTNSLFGLKEAKENWVEMWKEDQ</sequence>
<comment type="subcellular location">
    <subcellularLocation>
        <location evidence="4">Membrane</location>
        <topology evidence="4">Multi-pass membrane protein</topology>
    </subcellularLocation>
</comment>
<comment type="disruption phenotype">
    <text evidence="3">No visible phenotype.</text>
</comment>
<comment type="miscellaneous">
    <text>Has no redundant functions with PAM68.</text>
</comment>
<protein>
    <recommendedName>
        <fullName>Uncharacterized protein PAM68-like</fullName>
    </recommendedName>
</protein>